<proteinExistence type="inferred from homology"/>
<sequence length="401" mass="44285">MALVSQARSLGKYFLLFDNLLVVLGFFVVFPLISIRFVDQLGWAALVVGLALGLRQLVQQGLGIFGGAIADRFGAKPMIVTGMLMRAAGFALMAMADEPWILWLACALSGLGGTLFDPPRTALVIKLTRPHERGRFYSLLMMQDSAGAVIGALIGSWLLQYDFHFVCWTGAAIFVLAAGWNAWLLPAYRISTVRAPMKEGLMRVLRDRRFVTYVLTLTGYYMLAVQVMLMLPIVVNELAGSPAAVKWMYAIEAALSLTLLYPLARWSEKRFSLEQRLMAGLLIMTLSLFPIGMITHLQTLFMFICFFYMGSILAEPARETLGASLADSRARGSYMGFSRLGLALGGALGYTGGGWMYDTGKTLDMPELPWFLLGIIGLITLAGLYWQFNRRRIESAMLSSS</sequence>
<name>MDTH_YERPN</name>
<accession>Q1CJI3</accession>
<accession>C4GSE2</accession>
<dbReference type="EMBL" id="CP000305">
    <property type="protein sequence ID" value="ABG17847.1"/>
    <property type="molecule type" value="Genomic_DNA"/>
</dbReference>
<dbReference type="EMBL" id="ACNQ01000009">
    <property type="protein sequence ID" value="EEO76952.1"/>
    <property type="molecule type" value="Genomic_DNA"/>
</dbReference>
<dbReference type="RefSeq" id="WP_002211217.1">
    <property type="nucleotide sequence ID" value="NZ_ACNQ01000009.1"/>
</dbReference>
<dbReference type="SMR" id="Q1CJI3"/>
<dbReference type="GeneID" id="57976620"/>
<dbReference type="KEGG" id="ypn:YPN_1517"/>
<dbReference type="HOGENOM" id="CLU_001265_60_2_6"/>
<dbReference type="Proteomes" id="UP000008936">
    <property type="component" value="Chromosome"/>
</dbReference>
<dbReference type="GO" id="GO:0005886">
    <property type="term" value="C:plasma membrane"/>
    <property type="evidence" value="ECO:0007669"/>
    <property type="project" value="UniProtKB-SubCell"/>
</dbReference>
<dbReference type="GO" id="GO:0022857">
    <property type="term" value="F:transmembrane transporter activity"/>
    <property type="evidence" value="ECO:0007669"/>
    <property type="project" value="UniProtKB-UniRule"/>
</dbReference>
<dbReference type="CDD" id="cd17329">
    <property type="entry name" value="MFS_MdtH_MDR_like"/>
    <property type="match status" value="1"/>
</dbReference>
<dbReference type="Gene3D" id="1.20.1250.20">
    <property type="entry name" value="MFS general substrate transporter like domains"/>
    <property type="match status" value="1"/>
</dbReference>
<dbReference type="HAMAP" id="MF_01529">
    <property type="entry name" value="MFS_MdtH"/>
    <property type="match status" value="1"/>
</dbReference>
<dbReference type="InterPro" id="IPR011701">
    <property type="entry name" value="MFS"/>
</dbReference>
<dbReference type="InterPro" id="IPR020846">
    <property type="entry name" value="MFS_dom"/>
</dbReference>
<dbReference type="InterPro" id="IPR036259">
    <property type="entry name" value="MFS_trans_sf"/>
</dbReference>
<dbReference type="InterPro" id="IPR050171">
    <property type="entry name" value="MFS_Transporters"/>
</dbReference>
<dbReference type="InterPro" id="IPR022855">
    <property type="entry name" value="Multidrug-R_MdtH"/>
</dbReference>
<dbReference type="NCBIfam" id="NF008650">
    <property type="entry name" value="PRK11646.1"/>
    <property type="match status" value="1"/>
</dbReference>
<dbReference type="PANTHER" id="PTHR23517:SF2">
    <property type="entry name" value="MULTIDRUG RESISTANCE PROTEIN MDTH"/>
    <property type="match status" value="1"/>
</dbReference>
<dbReference type="PANTHER" id="PTHR23517">
    <property type="entry name" value="RESISTANCE PROTEIN MDTM, PUTATIVE-RELATED-RELATED"/>
    <property type="match status" value="1"/>
</dbReference>
<dbReference type="Pfam" id="PF07690">
    <property type="entry name" value="MFS_1"/>
    <property type="match status" value="1"/>
</dbReference>
<dbReference type="SUPFAM" id="SSF103473">
    <property type="entry name" value="MFS general substrate transporter"/>
    <property type="match status" value="1"/>
</dbReference>
<dbReference type="PROSITE" id="PS50850">
    <property type="entry name" value="MFS"/>
    <property type="match status" value="1"/>
</dbReference>
<protein>
    <recommendedName>
        <fullName evidence="1">Multidrug resistance protein MdtH</fullName>
    </recommendedName>
</protein>
<organism>
    <name type="scientific">Yersinia pestis bv. Antiqua (strain Nepal516)</name>
    <dbReference type="NCBI Taxonomy" id="377628"/>
    <lineage>
        <taxon>Bacteria</taxon>
        <taxon>Pseudomonadati</taxon>
        <taxon>Pseudomonadota</taxon>
        <taxon>Gammaproteobacteria</taxon>
        <taxon>Enterobacterales</taxon>
        <taxon>Yersiniaceae</taxon>
        <taxon>Yersinia</taxon>
    </lineage>
</organism>
<gene>
    <name evidence="1" type="primary">mdtH</name>
    <name type="ordered locus">YPN_1517</name>
    <name type="ORF">YP516_1684</name>
</gene>
<comment type="subcellular location">
    <subcellularLocation>
        <location evidence="1">Cell inner membrane</location>
        <topology evidence="1">Multi-pass membrane protein</topology>
    </subcellularLocation>
</comment>
<comment type="similarity">
    <text evidence="1">Belongs to the major facilitator superfamily. DHA1 family. MdtH (TC 2.A.1.2.21) subfamily.</text>
</comment>
<keyword id="KW-0997">Cell inner membrane</keyword>
<keyword id="KW-1003">Cell membrane</keyword>
<keyword id="KW-0472">Membrane</keyword>
<keyword id="KW-0812">Transmembrane</keyword>
<keyword id="KW-1133">Transmembrane helix</keyword>
<keyword id="KW-0813">Transport</keyword>
<reference key="1">
    <citation type="journal article" date="2006" name="J. Bacteriol.">
        <title>Complete genome sequence of Yersinia pestis strains Antiqua and Nepal516: evidence of gene reduction in an emerging pathogen.</title>
        <authorList>
            <person name="Chain P.S.G."/>
            <person name="Hu P."/>
            <person name="Malfatti S.A."/>
            <person name="Radnedge L."/>
            <person name="Larimer F."/>
            <person name="Vergez L.M."/>
            <person name="Worsham P."/>
            <person name="Chu M.C."/>
            <person name="Andersen G.L."/>
        </authorList>
    </citation>
    <scope>NUCLEOTIDE SEQUENCE [LARGE SCALE GENOMIC DNA]</scope>
    <source>
        <strain>Nepal516</strain>
    </source>
</reference>
<reference key="2">
    <citation type="submission" date="2009-04" db="EMBL/GenBank/DDBJ databases">
        <title>Yersinia pestis Nepal516A whole genome shotgun sequencing project.</title>
        <authorList>
            <person name="Plunkett G. III"/>
            <person name="Anderson B.D."/>
            <person name="Baumler D.J."/>
            <person name="Burland V."/>
            <person name="Cabot E.L."/>
            <person name="Glasner J.D."/>
            <person name="Mau B."/>
            <person name="Neeno-Eckwall E."/>
            <person name="Perna N.T."/>
            <person name="Munk A.C."/>
            <person name="Tapia R."/>
            <person name="Green L.D."/>
            <person name="Rogers Y.C."/>
            <person name="Detter J.C."/>
            <person name="Bruce D.C."/>
            <person name="Brettin T.S."/>
        </authorList>
    </citation>
    <scope>NUCLEOTIDE SEQUENCE [LARGE SCALE GENOMIC DNA]</scope>
    <source>
        <strain>Nepal516</strain>
    </source>
</reference>
<feature type="chain" id="PRO_0000280505" description="Multidrug resistance protein MdtH">
    <location>
        <begin position="1"/>
        <end position="401"/>
    </location>
</feature>
<feature type="transmembrane region" description="Helical" evidence="1">
    <location>
        <begin position="13"/>
        <end position="33"/>
    </location>
</feature>
<feature type="transmembrane region" description="Helical" evidence="1">
    <location>
        <begin position="34"/>
        <end position="54"/>
    </location>
</feature>
<feature type="transmembrane region" description="Helical" evidence="1">
    <location>
        <begin position="99"/>
        <end position="116"/>
    </location>
</feature>
<feature type="transmembrane region" description="Helical" evidence="1">
    <location>
        <begin position="139"/>
        <end position="159"/>
    </location>
</feature>
<feature type="transmembrane region" description="Helical" evidence="1">
    <location>
        <begin position="165"/>
        <end position="185"/>
    </location>
</feature>
<feature type="transmembrane region" description="Helical" evidence="1">
    <location>
        <begin position="214"/>
        <end position="234"/>
    </location>
</feature>
<feature type="transmembrane region" description="Helical" evidence="1">
    <location>
        <begin position="243"/>
        <end position="263"/>
    </location>
</feature>
<feature type="transmembrane region" description="Helical" evidence="1">
    <location>
        <begin position="277"/>
        <end position="297"/>
    </location>
</feature>
<feature type="transmembrane region" description="Helical" evidence="1">
    <location>
        <begin position="299"/>
        <end position="319"/>
    </location>
</feature>
<feature type="transmembrane region" description="Helical" evidence="1">
    <location>
        <begin position="340"/>
        <end position="360"/>
    </location>
</feature>
<feature type="transmembrane region" description="Helical" evidence="1">
    <location>
        <begin position="368"/>
        <end position="388"/>
    </location>
</feature>
<evidence type="ECO:0000255" key="1">
    <source>
        <dbReference type="HAMAP-Rule" id="MF_01529"/>
    </source>
</evidence>